<organism>
    <name type="scientific">Saccharomyces cerevisiae (strain ATCC 204508 / S288c)</name>
    <name type="common">Baker's yeast</name>
    <dbReference type="NCBI Taxonomy" id="559292"/>
    <lineage>
        <taxon>Eukaryota</taxon>
        <taxon>Fungi</taxon>
        <taxon>Dikarya</taxon>
        <taxon>Ascomycota</taxon>
        <taxon>Saccharomycotina</taxon>
        <taxon>Saccharomycetes</taxon>
        <taxon>Saccharomycetales</taxon>
        <taxon>Saccharomycetaceae</taxon>
        <taxon>Saccharomyces</taxon>
    </lineage>
</organism>
<sequence>MKCTIPEQQKVILIDEIGGYDVIKYEDYPVPSISEEELLIKNKYTGVNYIESYFRKGIYPCEKPYVLGREASGTVVAKGKGVTNFEVGDQVAYISNSTFAQYSKISSQGPVMKLPKGTSDEELKLYAAGLLQVLTALSFTNEAYHVKKGDYVLLFAAAGGVGLILNQLLKMKGAHTIAVASTDEKLKIAKEYGAEYLINASKEDILRQVLKFTNGKGVDASFDSVGKDTFEISLAALKRKGVFVSFGNASGLIPPFSITRLSPKNITLVRPQLYGYIADPEEWKYYSDEFFGLVNSKKLNIKIYKTYPLRDYRTAAADIESRKTVGKLVLEIPQ</sequence>
<name>QOR_YEAST</name>
<keyword id="KW-0002">3D-structure</keyword>
<keyword id="KW-0521">NADP</keyword>
<keyword id="KW-0560">Oxidoreductase</keyword>
<keyword id="KW-1185">Reference proteome</keyword>
<evidence type="ECO:0000305" key="1"/>
<evidence type="ECO:0007829" key="2">
    <source>
        <dbReference type="PDB" id="3QWA"/>
    </source>
</evidence>
<evidence type="ECO:0007829" key="3">
    <source>
        <dbReference type="PDB" id="3QWB"/>
    </source>
</evidence>
<proteinExistence type="evidence at protein level"/>
<reference key="1">
    <citation type="journal article" date="1994" name="EMBO J.">
        <title>Complete DNA sequence of yeast chromosome II.</title>
        <authorList>
            <person name="Feldmann H."/>
            <person name="Aigle M."/>
            <person name="Aljinovic G."/>
            <person name="Andre B."/>
            <person name="Baclet M.C."/>
            <person name="Barthe C."/>
            <person name="Baur A."/>
            <person name="Becam A.-M."/>
            <person name="Biteau N."/>
            <person name="Boles E."/>
            <person name="Brandt T."/>
            <person name="Brendel M."/>
            <person name="Brueckner M."/>
            <person name="Bussereau F."/>
            <person name="Christiansen C."/>
            <person name="Contreras R."/>
            <person name="Crouzet M."/>
            <person name="Cziepluch C."/>
            <person name="Demolis N."/>
            <person name="Delaveau T."/>
            <person name="Doignon F."/>
            <person name="Domdey H."/>
            <person name="Duesterhus S."/>
            <person name="Dubois E."/>
            <person name="Dujon B."/>
            <person name="El Bakkoury M."/>
            <person name="Entian K.-D."/>
            <person name="Feuermann M."/>
            <person name="Fiers W."/>
            <person name="Fobo G.M."/>
            <person name="Fritz C."/>
            <person name="Gassenhuber J."/>
            <person name="Glansdorff N."/>
            <person name="Goffeau A."/>
            <person name="Grivell L.A."/>
            <person name="de Haan M."/>
            <person name="Hein C."/>
            <person name="Herbert C.J."/>
            <person name="Hollenberg C.P."/>
            <person name="Holmstroem K."/>
            <person name="Jacq C."/>
            <person name="Jacquet M."/>
            <person name="Jauniaux J.-C."/>
            <person name="Jonniaux J.-L."/>
            <person name="Kallesoee T."/>
            <person name="Kiesau P."/>
            <person name="Kirchrath L."/>
            <person name="Koetter P."/>
            <person name="Korol S."/>
            <person name="Liebl S."/>
            <person name="Logghe M."/>
            <person name="Lohan A.J.E."/>
            <person name="Louis E.J."/>
            <person name="Li Z.Y."/>
            <person name="Maat M.J."/>
            <person name="Mallet L."/>
            <person name="Mannhaupt G."/>
            <person name="Messenguy F."/>
            <person name="Miosga T."/>
            <person name="Molemans F."/>
            <person name="Mueller S."/>
            <person name="Nasr F."/>
            <person name="Obermaier B."/>
            <person name="Perea J."/>
            <person name="Pierard A."/>
            <person name="Piravandi E."/>
            <person name="Pohl F.M."/>
            <person name="Pohl T.M."/>
            <person name="Potier S."/>
            <person name="Proft M."/>
            <person name="Purnelle B."/>
            <person name="Ramezani Rad M."/>
            <person name="Rieger M."/>
            <person name="Rose M."/>
            <person name="Schaaff-Gerstenschlaeger I."/>
            <person name="Scherens B."/>
            <person name="Schwarzlose C."/>
            <person name="Skala J."/>
            <person name="Slonimski P.P."/>
            <person name="Smits P.H.M."/>
            <person name="Souciet J.-L."/>
            <person name="Steensma H.Y."/>
            <person name="Stucka R."/>
            <person name="Urrestarazu L.A."/>
            <person name="van der Aart Q.J.M."/>
            <person name="Van Dyck L."/>
            <person name="Vassarotti A."/>
            <person name="Vetter I."/>
            <person name="Vierendeels F."/>
            <person name="Vissers S."/>
            <person name="Wagner G."/>
            <person name="de Wergifosse P."/>
            <person name="Wolfe K.H."/>
            <person name="Zagulski M."/>
            <person name="Zimmermann F.K."/>
            <person name="Mewes H.-W."/>
            <person name="Kleine K."/>
        </authorList>
    </citation>
    <scope>NUCLEOTIDE SEQUENCE [LARGE SCALE GENOMIC DNA]</scope>
    <source>
        <strain>ATCC 204508 / S288c</strain>
    </source>
</reference>
<reference key="2">
    <citation type="journal article" date="2014" name="G3 (Bethesda)">
        <title>The reference genome sequence of Saccharomyces cerevisiae: Then and now.</title>
        <authorList>
            <person name="Engel S.R."/>
            <person name="Dietrich F.S."/>
            <person name="Fisk D.G."/>
            <person name="Binkley G."/>
            <person name="Balakrishnan R."/>
            <person name="Costanzo M.C."/>
            <person name="Dwight S.S."/>
            <person name="Hitz B.C."/>
            <person name="Karra K."/>
            <person name="Nash R.S."/>
            <person name="Weng S."/>
            <person name="Wong E.D."/>
            <person name="Lloyd P."/>
            <person name="Skrzypek M.S."/>
            <person name="Miyasato S.R."/>
            <person name="Simison M."/>
            <person name="Cherry J.M."/>
        </authorList>
    </citation>
    <scope>GENOME REANNOTATION</scope>
    <source>
        <strain>ATCC 204508 / S288c</strain>
    </source>
</reference>
<reference key="3">
    <citation type="journal article" date="2007" name="Genome Res.">
        <title>Approaching a complete repository of sequence-verified protein-encoding clones for Saccharomyces cerevisiae.</title>
        <authorList>
            <person name="Hu Y."/>
            <person name="Rolfs A."/>
            <person name="Bhullar B."/>
            <person name="Murthy T.V.S."/>
            <person name="Zhu C."/>
            <person name="Berger M.F."/>
            <person name="Camargo A.A."/>
            <person name="Kelley F."/>
            <person name="McCarron S."/>
            <person name="Jepson D."/>
            <person name="Richardson A."/>
            <person name="Raphael J."/>
            <person name="Moreira D."/>
            <person name="Taycher E."/>
            <person name="Zuo D."/>
            <person name="Mohr S."/>
            <person name="Kane M.F."/>
            <person name="Williamson J."/>
            <person name="Simpson A.J.G."/>
            <person name="Bulyk M.L."/>
            <person name="Harlow E."/>
            <person name="Marsischky G."/>
            <person name="Kolodner R.D."/>
            <person name="LaBaer J."/>
        </authorList>
    </citation>
    <scope>NUCLEOTIDE SEQUENCE [GENOMIC DNA]</scope>
    <source>
        <strain>ATCC 204508 / S288c</strain>
    </source>
</reference>
<protein>
    <recommendedName>
        <fullName>Probable quinone oxidoreductase</fullName>
        <ecNumber>1.6.5.5</ecNumber>
    </recommendedName>
    <alternativeName>
        <fullName>NADPH:quinone reductase</fullName>
    </alternativeName>
</protein>
<feature type="chain" id="PRO_0000160912" description="Probable quinone oxidoreductase">
    <location>
        <begin position="1"/>
        <end position="334"/>
    </location>
</feature>
<feature type="strand" evidence="3">
    <location>
        <begin position="7"/>
        <end position="19"/>
    </location>
</feature>
<feature type="helix" evidence="3">
    <location>
        <begin position="20"/>
        <end position="22"/>
    </location>
</feature>
<feature type="strand" evidence="3">
    <location>
        <begin position="23"/>
        <end position="29"/>
    </location>
</feature>
<feature type="strand" evidence="3">
    <location>
        <begin position="37"/>
        <end position="46"/>
    </location>
</feature>
<feature type="helix" evidence="3">
    <location>
        <begin position="51"/>
        <end position="55"/>
    </location>
</feature>
<feature type="strand" evidence="3">
    <location>
        <begin position="63"/>
        <end position="66"/>
    </location>
</feature>
<feature type="strand" evidence="3">
    <location>
        <begin position="69"/>
        <end position="78"/>
    </location>
</feature>
<feature type="strand" evidence="3">
    <location>
        <begin position="90"/>
        <end position="94"/>
    </location>
</feature>
<feature type="strand" evidence="3">
    <location>
        <begin position="99"/>
        <end position="106"/>
    </location>
</feature>
<feature type="strand" evidence="3">
    <location>
        <begin position="109"/>
        <end position="113"/>
    </location>
</feature>
<feature type="helix" evidence="3">
    <location>
        <begin position="120"/>
        <end position="141"/>
    </location>
</feature>
<feature type="strand" evidence="3">
    <location>
        <begin position="151"/>
        <end position="156"/>
    </location>
</feature>
<feature type="helix" evidence="3">
    <location>
        <begin position="160"/>
        <end position="171"/>
    </location>
</feature>
<feature type="strand" evidence="3">
    <location>
        <begin position="175"/>
        <end position="182"/>
    </location>
</feature>
<feature type="helix" evidence="3">
    <location>
        <begin position="183"/>
        <end position="191"/>
    </location>
</feature>
<feature type="strand" evidence="3">
    <location>
        <begin position="195"/>
        <end position="199"/>
    </location>
</feature>
<feature type="turn" evidence="3">
    <location>
        <begin position="200"/>
        <end position="202"/>
    </location>
</feature>
<feature type="helix" evidence="3">
    <location>
        <begin position="205"/>
        <end position="212"/>
    </location>
</feature>
<feature type="turn" evidence="3">
    <location>
        <begin position="213"/>
        <end position="215"/>
    </location>
</feature>
<feature type="strand" evidence="3">
    <location>
        <begin position="218"/>
        <end position="223"/>
    </location>
</feature>
<feature type="helix" evidence="3">
    <location>
        <begin position="226"/>
        <end position="229"/>
    </location>
</feature>
<feature type="helix" evidence="3">
    <location>
        <begin position="230"/>
        <end position="236"/>
    </location>
</feature>
<feature type="strand" evidence="3">
    <location>
        <begin position="237"/>
        <end position="245"/>
    </location>
</feature>
<feature type="helix" evidence="2">
    <location>
        <begin position="248"/>
        <end position="252"/>
    </location>
</feature>
<feature type="helix" evidence="3">
    <location>
        <begin position="258"/>
        <end position="261"/>
    </location>
</feature>
<feature type="turn" evidence="3">
    <location>
        <begin position="262"/>
        <end position="265"/>
    </location>
</feature>
<feature type="strand" evidence="3">
    <location>
        <begin position="267"/>
        <end position="269"/>
    </location>
</feature>
<feature type="helix" evidence="3">
    <location>
        <begin position="273"/>
        <end position="276"/>
    </location>
</feature>
<feature type="helix" evidence="3">
    <location>
        <begin position="280"/>
        <end position="295"/>
    </location>
</feature>
<feature type="strand" evidence="3">
    <location>
        <begin position="303"/>
        <end position="308"/>
    </location>
</feature>
<feature type="helix" evidence="3">
    <location>
        <begin position="309"/>
        <end position="311"/>
    </location>
</feature>
<feature type="helix" evidence="3">
    <location>
        <begin position="312"/>
        <end position="320"/>
    </location>
</feature>
<feature type="strand" evidence="3">
    <location>
        <begin position="326"/>
        <end position="331"/>
    </location>
</feature>
<comment type="catalytic activity">
    <reaction>
        <text>2 a quinone + NADPH + H(+) = 2 a 1,4-benzosemiquinone + NADP(+)</text>
        <dbReference type="Rhea" id="RHEA:14269"/>
        <dbReference type="ChEBI" id="CHEBI:15378"/>
        <dbReference type="ChEBI" id="CHEBI:57783"/>
        <dbReference type="ChEBI" id="CHEBI:58349"/>
        <dbReference type="ChEBI" id="CHEBI:132124"/>
        <dbReference type="ChEBI" id="CHEBI:134225"/>
        <dbReference type="EC" id="1.6.5.5"/>
    </reaction>
</comment>
<comment type="similarity">
    <text evidence="1">Belongs to the zinc-containing alcohol dehydrogenase family. Quinone oxidoreductase subfamily.</text>
</comment>
<gene>
    <name type="primary">ZTA1</name>
    <name type="ordered locus">YBR046C</name>
    <name type="ORF">YBR0421</name>
</gene>
<accession>P38230</accession>
<accession>D6VQ46</accession>
<dbReference type="EC" id="1.6.5.5"/>
<dbReference type="EMBL" id="Z35915">
    <property type="protein sequence ID" value="CAA84988.1"/>
    <property type="molecule type" value="Genomic_DNA"/>
</dbReference>
<dbReference type="EMBL" id="AY557866">
    <property type="protein sequence ID" value="AAS56192.1"/>
    <property type="molecule type" value="Genomic_DNA"/>
</dbReference>
<dbReference type="EMBL" id="BK006936">
    <property type="protein sequence ID" value="DAA07166.1"/>
    <property type="molecule type" value="Genomic_DNA"/>
</dbReference>
<dbReference type="PIR" id="S45904">
    <property type="entry name" value="S45904"/>
</dbReference>
<dbReference type="RefSeq" id="NP_009602.1">
    <property type="nucleotide sequence ID" value="NM_001178394.1"/>
</dbReference>
<dbReference type="PDB" id="3QWA">
    <property type="method" value="X-ray"/>
    <property type="resolution" value="2.00 A"/>
    <property type="chains" value="A/B=1-334"/>
</dbReference>
<dbReference type="PDB" id="3QWB">
    <property type="method" value="X-ray"/>
    <property type="resolution" value="1.59 A"/>
    <property type="chains" value="A/B/C/D=1-334"/>
</dbReference>
<dbReference type="PDBsum" id="3QWA"/>
<dbReference type="PDBsum" id="3QWB"/>
<dbReference type="SMR" id="P38230"/>
<dbReference type="BioGRID" id="32748">
    <property type="interactions" value="63"/>
</dbReference>
<dbReference type="FunCoup" id="P38230">
    <property type="interactions" value="782"/>
</dbReference>
<dbReference type="IntAct" id="P38230">
    <property type="interactions" value="4"/>
</dbReference>
<dbReference type="STRING" id="4932.YBR046C"/>
<dbReference type="PaxDb" id="4932-YBR046C"/>
<dbReference type="PeptideAtlas" id="P38230"/>
<dbReference type="EnsemblFungi" id="YBR046C_mRNA">
    <property type="protein sequence ID" value="YBR046C"/>
    <property type="gene ID" value="YBR046C"/>
</dbReference>
<dbReference type="GeneID" id="852335"/>
<dbReference type="KEGG" id="sce:YBR046C"/>
<dbReference type="AGR" id="SGD:S000000250"/>
<dbReference type="SGD" id="S000000250">
    <property type="gene designation" value="ZTA1"/>
</dbReference>
<dbReference type="VEuPathDB" id="FungiDB:YBR046C"/>
<dbReference type="eggNOG" id="KOG1197">
    <property type="taxonomic scope" value="Eukaryota"/>
</dbReference>
<dbReference type="GeneTree" id="ENSGT00940000154882"/>
<dbReference type="HOGENOM" id="CLU_026673_3_1_1"/>
<dbReference type="InParanoid" id="P38230"/>
<dbReference type="OMA" id="VDMSYSR"/>
<dbReference type="OrthoDB" id="48317at2759"/>
<dbReference type="BioCyc" id="YEAST:YBR046C-MONOMER"/>
<dbReference type="BRENDA" id="1.6.5.5">
    <property type="organism ID" value="984"/>
</dbReference>
<dbReference type="BioGRID-ORCS" id="852335">
    <property type="hits" value="0 hits in 10 CRISPR screens"/>
</dbReference>
<dbReference type="EvolutionaryTrace" id="P38230"/>
<dbReference type="PRO" id="PR:P38230"/>
<dbReference type="Proteomes" id="UP000002311">
    <property type="component" value="Chromosome II"/>
</dbReference>
<dbReference type="RNAct" id="P38230">
    <property type="molecule type" value="protein"/>
</dbReference>
<dbReference type="GO" id="GO:0005737">
    <property type="term" value="C:cytoplasm"/>
    <property type="evidence" value="ECO:0007005"/>
    <property type="project" value="SGD"/>
</dbReference>
<dbReference type="GO" id="GO:0005829">
    <property type="term" value="C:cytosol"/>
    <property type="evidence" value="ECO:0000318"/>
    <property type="project" value="GO_Central"/>
</dbReference>
<dbReference type="GO" id="GO:0005634">
    <property type="term" value="C:nucleus"/>
    <property type="evidence" value="ECO:0007005"/>
    <property type="project" value="SGD"/>
</dbReference>
<dbReference type="GO" id="GO:0032440">
    <property type="term" value="F:2-alkenal reductase [NAD(P)+] activity"/>
    <property type="evidence" value="ECO:0000314"/>
    <property type="project" value="SGD"/>
</dbReference>
<dbReference type="GO" id="GO:0035925">
    <property type="term" value="F:mRNA 3'-UTR AU-rich region binding"/>
    <property type="evidence" value="ECO:0000314"/>
    <property type="project" value="SGD"/>
</dbReference>
<dbReference type="GO" id="GO:0070402">
    <property type="term" value="F:NADPH binding"/>
    <property type="evidence" value="ECO:0000318"/>
    <property type="project" value="GO_Central"/>
</dbReference>
<dbReference type="GO" id="GO:0003960">
    <property type="term" value="F:NADPH:quinone reductase activity"/>
    <property type="evidence" value="ECO:0000314"/>
    <property type="project" value="SGD"/>
</dbReference>
<dbReference type="GO" id="GO:0008270">
    <property type="term" value="F:zinc ion binding"/>
    <property type="evidence" value="ECO:0007669"/>
    <property type="project" value="InterPro"/>
</dbReference>
<dbReference type="GO" id="GO:0034599">
    <property type="term" value="P:cellular response to oxidative stress"/>
    <property type="evidence" value="ECO:0000315"/>
    <property type="project" value="SGD"/>
</dbReference>
<dbReference type="CDD" id="cd05286">
    <property type="entry name" value="QOR2"/>
    <property type="match status" value="1"/>
</dbReference>
<dbReference type="FunFam" id="3.40.50.720:FF:000053">
    <property type="entry name" value="Quinone oxidoreductase 1"/>
    <property type="match status" value="1"/>
</dbReference>
<dbReference type="Gene3D" id="3.90.180.10">
    <property type="entry name" value="Medium-chain alcohol dehydrogenases, catalytic domain"/>
    <property type="match status" value="1"/>
</dbReference>
<dbReference type="Gene3D" id="3.40.50.720">
    <property type="entry name" value="NAD(P)-binding Rossmann-like Domain"/>
    <property type="match status" value="1"/>
</dbReference>
<dbReference type="InterPro" id="IPR013149">
    <property type="entry name" value="ADH-like_C"/>
</dbReference>
<dbReference type="InterPro" id="IPR013154">
    <property type="entry name" value="ADH-like_N"/>
</dbReference>
<dbReference type="InterPro" id="IPR011032">
    <property type="entry name" value="GroES-like_sf"/>
</dbReference>
<dbReference type="InterPro" id="IPR036291">
    <property type="entry name" value="NAD(P)-bd_dom_sf"/>
</dbReference>
<dbReference type="InterPro" id="IPR020843">
    <property type="entry name" value="PKS_ER"/>
</dbReference>
<dbReference type="InterPro" id="IPR047618">
    <property type="entry name" value="QOR-like"/>
</dbReference>
<dbReference type="InterPro" id="IPR002364">
    <property type="entry name" value="Quin_OxRdtase/zeta-crystal_CS"/>
</dbReference>
<dbReference type="PANTHER" id="PTHR48106">
    <property type="entry name" value="QUINONE OXIDOREDUCTASE PIG3-RELATED"/>
    <property type="match status" value="1"/>
</dbReference>
<dbReference type="PANTHER" id="PTHR48106:SF13">
    <property type="entry name" value="QUINONE OXIDOREDUCTASE-RELATED"/>
    <property type="match status" value="1"/>
</dbReference>
<dbReference type="Pfam" id="PF08240">
    <property type="entry name" value="ADH_N"/>
    <property type="match status" value="1"/>
</dbReference>
<dbReference type="Pfam" id="PF00107">
    <property type="entry name" value="ADH_zinc_N"/>
    <property type="match status" value="1"/>
</dbReference>
<dbReference type="SMART" id="SM00829">
    <property type="entry name" value="PKS_ER"/>
    <property type="match status" value="1"/>
</dbReference>
<dbReference type="SUPFAM" id="SSF50129">
    <property type="entry name" value="GroES-like"/>
    <property type="match status" value="1"/>
</dbReference>
<dbReference type="SUPFAM" id="SSF51735">
    <property type="entry name" value="NAD(P)-binding Rossmann-fold domains"/>
    <property type="match status" value="1"/>
</dbReference>
<dbReference type="PROSITE" id="PS01162">
    <property type="entry name" value="QOR_ZETA_CRYSTAL"/>
    <property type="match status" value="1"/>
</dbReference>